<keyword id="KW-0472">Membrane</keyword>
<keyword id="KW-0597">Phosphoprotein</keyword>
<keyword id="KW-1185">Reference proteome</keyword>
<keyword id="KW-0812">Transmembrane</keyword>
<keyword id="KW-1133">Transmembrane helix</keyword>
<keyword id="KW-0813">Transport</keyword>
<evidence type="ECO:0000250" key="1">
    <source>
        <dbReference type="UniProtKB" id="Q8WV83"/>
    </source>
</evidence>
<evidence type="ECO:0000255" key="2"/>
<evidence type="ECO:0000256" key="3">
    <source>
        <dbReference type="SAM" id="MobiDB-lite"/>
    </source>
</evidence>
<evidence type="ECO:0000305" key="4"/>
<sequence>MVPPRHHPGAGRPGALSSSPPFRLRSSKFSGIALQDLRKAFKIRLQMVCVFIMNRMNSQSSGFTQRKRMALGIVILLLVDVIWVASSELTSYVFTQYNKPFFSTFAKTSMFVLYLLGFIVWKPWRQQCTRGFRGKHATFFADAEGYFAACTTDTTMNSSLSEPLYVPVKFHDLPSEKPENTNIDTEKIPKKSRVRFSNIMEIRQLPSSHALEAKLSRMSYPTVKEQESLLKTVGKLTATQVAKISFFFCFVWFLANFSYQEALSDTQVAIVNILSSTSGLFTLILAAMFPSNSGDRFTLSKLLAVILSIGGVVLVNLSGSEKSPGRNTIGSIWSLVGAMLYAVYIVMIKRKVDREDKLDIPMFFGFVGLFNLLLLWPGFFLLHYTGFEDFEFPNKVVLMCIVINGLIGTVLSEFLWLWGCFLTSSLIGTLALSLTIPLSIIADMCMQKVQFSWLFFAGAIPVFFSFFIATLLCHYNNWDPVMVGIRRIFAFICRKHRIQKVPEDSEQCESLIPMHGVSQEDGAS</sequence>
<protein>
    <recommendedName>
        <fullName>Solute carrier family 35 member F5</fullName>
    </recommendedName>
</protein>
<feature type="chain" id="PRO_0000311955" description="Solute carrier family 35 member F5">
    <location>
        <begin position="1"/>
        <end position="524"/>
    </location>
</feature>
<feature type="transmembrane region" description="Helical" evidence="2">
    <location>
        <begin position="69"/>
        <end position="89"/>
    </location>
</feature>
<feature type="transmembrane region" description="Helical" evidence="2">
    <location>
        <begin position="101"/>
        <end position="121"/>
    </location>
</feature>
<feature type="transmembrane region" description="Helical" evidence="2">
    <location>
        <begin position="244"/>
        <end position="264"/>
    </location>
</feature>
<feature type="transmembrane region" description="Helical" evidence="2">
    <location>
        <begin position="269"/>
        <end position="289"/>
    </location>
</feature>
<feature type="transmembrane region" description="Helical" evidence="2">
    <location>
        <begin position="297"/>
        <end position="317"/>
    </location>
</feature>
<feature type="transmembrane region" description="Helical" evidence="2">
    <location>
        <begin position="328"/>
        <end position="348"/>
    </location>
</feature>
<feature type="transmembrane region" description="Helical" evidence="2">
    <location>
        <begin position="362"/>
        <end position="382"/>
    </location>
</feature>
<feature type="transmembrane region" description="Helical" evidence="2">
    <location>
        <begin position="396"/>
        <end position="416"/>
    </location>
</feature>
<feature type="transmembrane region" description="Helical" evidence="2">
    <location>
        <begin position="421"/>
        <end position="441"/>
    </location>
</feature>
<feature type="transmembrane region" description="Helical" evidence="2">
    <location>
        <begin position="453"/>
        <end position="473"/>
    </location>
</feature>
<feature type="domain" description="EamA">
    <location>
        <begin position="253"/>
        <end position="317"/>
    </location>
</feature>
<feature type="region of interest" description="Disordered" evidence="3">
    <location>
        <begin position="1"/>
        <end position="22"/>
    </location>
</feature>
<feature type="compositionally biased region" description="Low complexity" evidence="3">
    <location>
        <begin position="13"/>
        <end position="22"/>
    </location>
</feature>
<feature type="modified residue" description="Phosphoserine" evidence="1">
    <location>
        <position position="207"/>
    </location>
</feature>
<accession>A6QL92</accession>
<reference key="1">
    <citation type="submission" date="2007-06" db="EMBL/GenBank/DDBJ databases">
        <authorList>
            <consortium name="NIH - Mammalian Gene Collection (MGC) project"/>
        </authorList>
    </citation>
    <scope>NUCLEOTIDE SEQUENCE [LARGE SCALE MRNA]</scope>
    <source>
        <strain>Crossbred X Angus</strain>
        <tissue>Ileum</tissue>
    </source>
</reference>
<gene>
    <name type="primary">SLC35F5</name>
</gene>
<proteinExistence type="evidence at transcript level"/>
<dbReference type="EMBL" id="BC147882">
    <property type="protein sequence ID" value="AAI47883.1"/>
    <property type="molecule type" value="mRNA"/>
</dbReference>
<dbReference type="RefSeq" id="NP_001094712.1">
    <property type="nucleotide sequence ID" value="NM_001101242.1"/>
</dbReference>
<dbReference type="FunCoup" id="A6QL92">
    <property type="interactions" value="3178"/>
</dbReference>
<dbReference type="STRING" id="9913.ENSBTAP00000028113"/>
<dbReference type="PaxDb" id="9913-ENSBTAP00000028113"/>
<dbReference type="Ensembl" id="ENSBTAT00000028113.5">
    <property type="protein sequence ID" value="ENSBTAP00000028113.4"/>
    <property type="gene ID" value="ENSBTAG00000021103.6"/>
</dbReference>
<dbReference type="GeneID" id="615480"/>
<dbReference type="KEGG" id="bta:615480"/>
<dbReference type="CTD" id="80255"/>
<dbReference type="VEuPathDB" id="HostDB:ENSBTAG00000021103"/>
<dbReference type="VGNC" id="VGNC:34835">
    <property type="gene designation" value="SLC35F5"/>
</dbReference>
<dbReference type="eggNOG" id="KOG2765">
    <property type="taxonomic scope" value="Eukaryota"/>
</dbReference>
<dbReference type="GeneTree" id="ENSGT00390000005949"/>
<dbReference type="HOGENOM" id="CLU_026578_2_1_1"/>
<dbReference type="InParanoid" id="A6QL92"/>
<dbReference type="OMA" id="MYGVYTI"/>
<dbReference type="OrthoDB" id="10041630at2759"/>
<dbReference type="TreeFam" id="TF314261"/>
<dbReference type="Proteomes" id="UP000009136">
    <property type="component" value="Chromosome 2"/>
</dbReference>
<dbReference type="Bgee" id="ENSBTAG00000021103">
    <property type="expression patterns" value="Expressed in diaphragm and 104 other cell types or tissues"/>
</dbReference>
<dbReference type="GO" id="GO:0016020">
    <property type="term" value="C:membrane"/>
    <property type="evidence" value="ECO:0007669"/>
    <property type="project" value="UniProtKB-SubCell"/>
</dbReference>
<dbReference type="PANTHER" id="PTHR23051:SF0">
    <property type="entry name" value="SOLUTE CARRIER FAMILY 35 MEMBER F5"/>
    <property type="match status" value="1"/>
</dbReference>
<dbReference type="PANTHER" id="PTHR23051">
    <property type="entry name" value="SOLUTE CARRIER FAMILY 35, MEMBER F5"/>
    <property type="match status" value="1"/>
</dbReference>
<dbReference type="SUPFAM" id="SSF103481">
    <property type="entry name" value="Multidrug resistance efflux transporter EmrE"/>
    <property type="match status" value="1"/>
</dbReference>
<organism>
    <name type="scientific">Bos taurus</name>
    <name type="common">Bovine</name>
    <dbReference type="NCBI Taxonomy" id="9913"/>
    <lineage>
        <taxon>Eukaryota</taxon>
        <taxon>Metazoa</taxon>
        <taxon>Chordata</taxon>
        <taxon>Craniata</taxon>
        <taxon>Vertebrata</taxon>
        <taxon>Euteleostomi</taxon>
        <taxon>Mammalia</taxon>
        <taxon>Eutheria</taxon>
        <taxon>Laurasiatheria</taxon>
        <taxon>Artiodactyla</taxon>
        <taxon>Ruminantia</taxon>
        <taxon>Pecora</taxon>
        <taxon>Bovidae</taxon>
        <taxon>Bovinae</taxon>
        <taxon>Bos</taxon>
    </lineage>
</organism>
<name>S35F5_BOVIN</name>
<comment type="function">
    <text evidence="4">Putative solute transporter.</text>
</comment>
<comment type="subcellular location">
    <subcellularLocation>
        <location evidence="4">Membrane</location>
        <topology evidence="4">Multi-pass membrane protein</topology>
    </subcellularLocation>
</comment>
<comment type="similarity">
    <text evidence="4">Belongs to the SLC35F solute transporter family.</text>
</comment>